<organism>
    <name type="scientific">Bacillus thuringiensis (strain Al Hakam)</name>
    <dbReference type="NCBI Taxonomy" id="412694"/>
    <lineage>
        <taxon>Bacteria</taxon>
        <taxon>Bacillati</taxon>
        <taxon>Bacillota</taxon>
        <taxon>Bacilli</taxon>
        <taxon>Bacillales</taxon>
        <taxon>Bacillaceae</taxon>
        <taxon>Bacillus</taxon>
        <taxon>Bacillus cereus group</taxon>
    </lineage>
</organism>
<feature type="chain" id="PRO_0000286757" description="2-aminoethylphosphonate--pyruvate transaminase">
    <location>
        <begin position="1"/>
        <end position="365"/>
    </location>
</feature>
<feature type="modified residue" description="N6-(pyridoxal phosphate)lysine" evidence="1">
    <location>
        <position position="194"/>
    </location>
</feature>
<evidence type="ECO:0000255" key="1">
    <source>
        <dbReference type="HAMAP-Rule" id="MF_01376"/>
    </source>
</evidence>
<reference key="1">
    <citation type="journal article" date="2007" name="J. Bacteriol.">
        <title>The complete genome sequence of Bacillus thuringiensis Al Hakam.</title>
        <authorList>
            <person name="Challacombe J.F."/>
            <person name="Altherr M.R."/>
            <person name="Xie G."/>
            <person name="Bhotika S.S."/>
            <person name="Brown N."/>
            <person name="Bruce D."/>
            <person name="Campbell C.S."/>
            <person name="Campbell M.L."/>
            <person name="Chen J."/>
            <person name="Chertkov O."/>
            <person name="Cleland C."/>
            <person name="Dimitrijevic M."/>
            <person name="Doggett N.A."/>
            <person name="Fawcett J.J."/>
            <person name="Glavina T."/>
            <person name="Goodwin L.A."/>
            <person name="Green L.D."/>
            <person name="Han C.S."/>
            <person name="Hill K.K."/>
            <person name="Hitchcock P."/>
            <person name="Jackson P.J."/>
            <person name="Keim P."/>
            <person name="Kewalramani A.R."/>
            <person name="Longmire J."/>
            <person name="Lucas S."/>
            <person name="Malfatti S."/>
            <person name="Martinez D."/>
            <person name="McMurry K."/>
            <person name="Meincke L.J."/>
            <person name="Misra M."/>
            <person name="Moseman B.L."/>
            <person name="Mundt M."/>
            <person name="Munk A.C."/>
            <person name="Okinaka R.T."/>
            <person name="Parson-Quintana B."/>
            <person name="Reilly L.P."/>
            <person name="Richardson P."/>
            <person name="Robinson D.L."/>
            <person name="Saunders E."/>
            <person name="Tapia R."/>
            <person name="Tesmer J.G."/>
            <person name="Thayer N."/>
            <person name="Thompson L.S."/>
            <person name="Tice H."/>
            <person name="Ticknor L.O."/>
            <person name="Wills P.L."/>
            <person name="Gilna P."/>
            <person name="Brettin T.S."/>
        </authorList>
    </citation>
    <scope>NUCLEOTIDE SEQUENCE [LARGE SCALE GENOMIC DNA]</scope>
    <source>
        <strain>Al Hakam</strain>
    </source>
</reference>
<comment type="function">
    <text evidence="1">Involved in phosphonate degradation.</text>
</comment>
<comment type="catalytic activity">
    <reaction evidence="1">
        <text>(2-aminoethyl)phosphonate + pyruvate = phosphonoacetaldehyde + L-alanine</text>
        <dbReference type="Rhea" id="RHEA:17021"/>
        <dbReference type="ChEBI" id="CHEBI:15361"/>
        <dbReference type="ChEBI" id="CHEBI:57418"/>
        <dbReference type="ChEBI" id="CHEBI:57972"/>
        <dbReference type="ChEBI" id="CHEBI:58383"/>
        <dbReference type="EC" id="2.6.1.37"/>
    </reaction>
</comment>
<comment type="cofactor">
    <cofactor evidence="1">
        <name>pyridoxal 5'-phosphate</name>
        <dbReference type="ChEBI" id="CHEBI:597326"/>
    </cofactor>
</comment>
<comment type="subunit">
    <text evidence="1">Homodimer.</text>
</comment>
<comment type="similarity">
    <text evidence="1">Belongs to the class-V pyridoxal-phosphate-dependent aminotransferase family. PhnW subfamily.</text>
</comment>
<dbReference type="EC" id="2.6.1.37" evidence="1"/>
<dbReference type="EMBL" id="CP000485">
    <property type="protein sequence ID" value="ABK84542.1"/>
    <property type="molecule type" value="Genomic_DNA"/>
</dbReference>
<dbReference type="RefSeq" id="WP_000138241.1">
    <property type="nucleotide sequence ID" value="NC_008600.1"/>
</dbReference>
<dbReference type="SMR" id="A0RBE9"/>
<dbReference type="KEGG" id="btl:BALH_1190"/>
<dbReference type="HOGENOM" id="CLU_027686_3_1_9"/>
<dbReference type="GO" id="GO:0047304">
    <property type="term" value="F:2-aminoethylphosphonate-pyruvate transaminase activity"/>
    <property type="evidence" value="ECO:0007669"/>
    <property type="project" value="UniProtKB-UniRule"/>
</dbReference>
<dbReference type="GO" id="GO:0019700">
    <property type="term" value="P:organic phosphonate catabolic process"/>
    <property type="evidence" value="ECO:0007669"/>
    <property type="project" value="InterPro"/>
</dbReference>
<dbReference type="Gene3D" id="3.90.1150.10">
    <property type="entry name" value="Aspartate Aminotransferase, domain 1"/>
    <property type="match status" value="1"/>
</dbReference>
<dbReference type="Gene3D" id="3.40.640.10">
    <property type="entry name" value="Type I PLP-dependent aspartate aminotransferase-like (Major domain)"/>
    <property type="match status" value="1"/>
</dbReference>
<dbReference type="HAMAP" id="MF_01376">
    <property type="entry name" value="PhnW_aminotrans_5"/>
    <property type="match status" value="1"/>
</dbReference>
<dbReference type="InterPro" id="IPR000192">
    <property type="entry name" value="Aminotrans_V_dom"/>
</dbReference>
<dbReference type="InterPro" id="IPR012703">
    <property type="entry name" value="NH2EtPonate_pyrv_transaminase"/>
</dbReference>
<dbReference type="InterPro" id="IPR015424">
    <property type="entry name" value="PyrdxlP-dep_Trfase"/>
</dbReference>
<dbReference type="InterPro" id="IPR015421">
    <property type="entry name" value="PyrdxlP-dep_Trfase_major"/>
</dbReference>
<dbReference type="InterPro" id="IPR015422">
    <property type="entry name" value="PyrdxlP-dep_Trfase_small"/>
</dbReference>
<dbReference type="InterPro" id="IPR024169">
    <property type="entry name" value="SP_NH2Trfase/AEP_transaminase"/>
</dbReference>
<dbReference type="NCBIfam" id="TIGR03301">
    <property type="entry name" value="PhnW-AepZ"/>
    <property type="match status" value="1"/>
</dbReference>
<dbReference type="NCBIfam" id="NF010006">
    <property type="entry name" value="PRK13479.1"/>
    <property type="match status" value="1"/>
</dbReference>
<dbReference type="NCBIfam" id="TIGR02326">
    <property type="entry name" value="transamin_PhnW"/>
    <property type="match status" value="1"/>
</dbReference>
<dbReference type="PANTHER" id="PTHR42778">
    <property type="entry name" value="2-AMINOETHYLPHOSPHONATE--PYRUVATE TRANSAMINASE"/>
    <property type="match status" value="1"/>
</dbReference>
<dbReference type="PANTHER" id="PTHR42778:SF1">
    <property type="entry name" value="2-AMINOETHYLPHOSPHONATE--PYRUVATE TRANSAMINASE"/>
    <property type="match status" value="1"/>
</dbReference>
<dbReference type="Pfam" id="PF00266">
    <property type="entry name" value="Aminotran_5"/>
    <property type="match status" value="1"/>
</dbReference>
<dbReference type="PIRSF" id="PIRSF000524">
    <property type="entry name" value="SPT"/>
    <property type="match status" value="1"/>
</dbReference>
<dbReference type="SUPFAM" id="SSF53383">
    <property type="entry name" value="PLP-dependent transferases"/>
    <property type="match status" value="1"/>
</dbReference>
<keyword id="KW-0032">Aminotransferase</keyword>
<keyword id="KW-0663">Pyridoxal phosphate</keyword>
<keyword id="KW-0670">Pyruvate</keyword>
<keyword id="KW-0808">Transferase</keyword>
<accession>A0RBE9</accession>
<gene>
    <name evidence="1" type="primary">phnW</name>
    <name type="ordered locus">BALH_1190</name>
</gene>
<name>PHNW_BACAH</name>
<proteinExistence type="inferred from homology"/>
<sequence length="365" mass="41329">MTENHYLLLTPGPLTTTKTVKEVMLYDWCTWDVEYNMMVQKVRAKLVSLATKEEEKYTTVLMQGSGTFSVEAVIGSVIPKNGKLLVCTNGAYGKRIVQMAEMLHIDVVVSQTEEWEPTNIVEVEKILQQDKEITHIAVVHCETTTGIINPIVDVCKLGKQYGKVTLVDAMSSFGGIEIDIAELEIDFLISSANKCIQGVPGFGFVIAQRDELLKCKGQARSLSLDLYDQWETMENQNGKWRFTSPTHVVHAFYQALLELEKEGGVRARYNRYYNNQKLLVNRMGEIGFKPLVNEKYQSPIITSFIYPEGNFEFQQLYNELKRYGFVIYPGKISKVDTFRIGNIGDVHEEDINRLVDSIAKGVVIG</sequence>
<protein>
    <recommendedName>
        <fullName evidence="1">2-aminoethylphosphonate--pyruvate transaminase</fullName>
        <ecNumber evidence="1">2.6.1.37</ecNumber>
    </recommendedName>
    <alternativeName>
        <fullName evidence="1">2-aminoethylphosphonate aminotransferase</fullName>
    </alternativeName>
    <alternativeName>
        <fullName evidence="1">AEP transaminase</fullName>
        <shortName evidence="1">AEPT</shortName>
    </alternativeName>
</protein>